<reference key="1">
    <citation type="journal article" date="2002" name="Science">
        <title>50 million years of genomic stasis in endosymbiotic bacteria.</title>
        <authorList>
            <person name="Tamas I."/>
            <person name="Klasson L."/>
            <person name="Canbaeck B."/>
            <person name="Naeslund A.K."/>
            <person name="Eriksson A.-S."/>
            <person name="Wernegreen J.J."/>
            <person name="Sandstroem J.P."/>
            <person name="Moran N.A."/>
            <person name="Andersson S.G.E."/>
        </authorList>
    </citation>
    <scope>NUCLEOTIDE SEQUENCE [LARGE SCALE GENOMIC DNA]</scope>
    <source>
        <strain>Sg</strain>
    </source>
</reference>
<keyword id="KW-1003">Cell membrane</keyword>
<keyword id="KW-0472">Membrane</keyword>
<keyword id="KW-0520">NAD</keyword>
<keyword id="KW-0874">Quinone</keyword>
<keyword id="KW-1278">Translocase</keyword>
<keyword id="KW-0812">Transmembrane</keyword>
<keyword id="KW-1133">Transmembrane helix</keyword>
<evidence type="ECO:0000250" key="1"/>
<evidence type="ECO:0000255" key="2"/>
<evidence type="ECO:0000305" key="3"/>
<comment type="function">
    <text evidence="1">NDH-1 shuttles electrons from NADH, via FMN and iron-sulfur (Fe-S) centers, to quinones in the respiratory chain. Couples the redox reaction to proton translocation (for every two electrons transferred, four hydrogen ions are translocated across the cytoplasmic membrane), and thus conserves the redox energy in a proton gradient (By similarity).</text>
</comment>
<comment type="catalytic activity">
    <reaction>
        <text>a quinone + NADH + 5 H(+)(in) = a quinol + NAD(+) + 4 H(+)(out)</text>
        <dbReference type="Rhea" id="RHEA:57888"/>
        <dbReference type="ChEBI" id="CHEBI:15378"/>
        <dbReference type="ChEBI" id="CHEBI:24646"/>
        <dbReference type="ChEBI" id="CHEBI:57540"/>
        <dbReference type="ChEBI" id="CHEBI:57945"/>
        <dbReference type="ChEBI" id="CHEBI:132124"/>
    </reaction>
</comment>
<comment type="subunit">
    <text evidence="1">Composed of 13 different subunits. Subunits NuoA, H, J, K, L, M, N constitute the membrane sector of the complex (By similarity).</text>
</comment>
<comment type="subcellular location">
    <subcellularLocation>
        <location evidence="3">Cell membrane</location>
        <topology evidence="3">Multi-pass membrane protein</topology>
    </subcellularLocation>
</comment>
<comment type="similarity">
    <text evidence="3">Belongs to the complex I subunit 6 family.</text>
</comment>
<sequence>MEFVFYACSLIAVISTLLVIIQKNAVYSLLYLIISLLSISGIFFIFGAFFAGALEVVIYAGAIIVLFVFVIMMLNLGKKNDLQEKKYLNPIFWIGPSFLSLILFLLMTYAIFFVKDKQIYFSLIDVKEVGINLFGPYLLLVELSSLLLLSALVVVFHIGKEKK</sequence>
<dbReference type="EC" id="7.1.1.-"/>
<dbReference type="EMBL" id="AE013218">
    <property type="protein sequence ID" value="AAM67723.1"/>
    <property type="molecule type" value="Genomic_DNA"/>
</dbReference>
<dbReference type="RefSeq" id="WP_011053690.1">
    <property type="nucleotide sequence ID" value="NC_004061.1"/>
</dbReference>
<dbReference type="SMR" id="Q8K9X9"/>
<dbReference type="STRING" id="198804.BUsg_155"/>
<dbReference type="GeneID" id="93003625"/>
<dbReference type="KEGG" id="bas:BUsg_155"/>
<dbReference type="eggNOG" id="COG0839">
    <property type="taxonomic scope" value="Bacteria"/>
</dbReference>
<dbReference type="HOGENOM" id="CLU_085957_0_1_6"/>
<dbReference type="Proteomes" id="UP000000416">
    <property type="component" value="Chromosome"/>
</dbReference>
<dbReference type="GO" id="GO:0005886">
    <property type="term" value="C:plasma membrane"/>
    <property type="evidence" value="ECO:0007669"/>
    <property type="project" value="UniProtKB-SubCell"/>
</dbReference>
<dbReference type="GO" id="GO:0008137">
    <property type="term" value="F:NADH dehydrogenase (ubiquinone) activity"/>
    <property type="evidence" value="ECO:0007669"/>
    <property type="project" value="InterPro"/>
</dbReference>
<dbReference type="GO" id="GO:0048038">
    <property type="term" value="F:quinone binding"/>
    <property type="evidence" value="ECO:0007669"/>
    <property type="project" value="UniProtKB-KW"/>
</dbReference>
<dbReference type="FunFam" id="1.20.120.1200:FF:000001">
    <property type="entry name" value="NADH-quinone oxidoreductase subunit J"/>
    <property type="match status" value="1"/>
</dbReference>
<dbReference type="Gene3D" id="1.20.120.1200">
    <property type="entry name" value="NADH-ubiquinone/plastoquinone oxidoreductase chain 6, subunit NuoJ"/>
    <property type="match status" value="1"/>
</dbReference>
<dbReference type="InterPro" id="IPR001457">
    <property type="entry name" value="NADH_UbQ/plastoQ_OxRdtase_su6"/>
</dbReference>
<dbReference type="InterPro" id="IPR042106">
    <property type="entry name" value="Nuo/plastoQ_OxRdtase_6_NuoJ"/>
</dbReference>
<dbReference type="NCBIfam" id="NF005162">
    <property type="entry name" value="PRK06638.1-1"/>
    <property type="match status" value="1"/>
</dbReference>
<dbReference type="PANTHER" id="PTHR33269">
    <property type="entry name" value="NADH-UBIQUINONE OXIDOREDUCTASE CHAIN 6"/>
    <property type="match status" value="1"/>
</dbReference>
<dbReference type="PANTHER" id="PTHR33269:SF17">
    <property type="entry name" value="NADH-UBIQUINONE OXIDOREDUCTASE CHAIN 6"/>
    <property type="match status" value="1"/>
</dbReference>
<dbReference type="Pfam" id="PF00499">
    <property type="entry name" value="Oxidored_q3"/>
    <property type="match status" value="1"/>
</dbReference>
<feature type="chain" id="PRO_0000118375" description="NADH-quinone oxidoreductase subunit J">
    <location>
        <begin position="1"/>
        <end position="163"/>
    </location>
</feature>
<feature type="transmembrane region" description="Helical" evidence="2">
    <location>
        <begin position="1"/>
        <end position="21"/>
    </location>
</feature>
<feature type="transmembrane region" description="Helical" evidence="2">
    <location>
        <begin position="30"/>
        <end position="50"/>
    </location>
</feature>
<feature type="transmembrane region" description="Helical" evidence="2">
    <location>
        <begin position="54"/>
        <end position="74"/>
    </location>
</feature>
<feature type="transmembrane region" description="Helical" evidence="2">
    <location>
        <begin position="94"/>
        <end position="114"/>
    </location>
</feature>
<feature type="transmembrane region" description="Helical" evidence="2">
    <location>
        <begin position="138"/>
        <end position="158"/>
    </location>
</feature>
<name>NUOJ_BUCAP</name>
<proteinExistence type="inferred from homology"/>
<gene>
    <name type="primary">nuoJ</name>
    <name type="ordered locus">BUsg_155</name>
</gene>
<accession>Q8K9X9</accession>
<organism>
    <name type="scientific">Buchnera aphidicola subsp. Schizaphis graminum (strain Sg)</name>
    <dbReference type="NCBI Taxonomy" id="198804"/>
    <lineage>
        <taxon>Bacteria</taxon>
        <taxon>Pseudomonadati</taxon>
        <taxon>Pseudomonadota</taxon>
        <taxon>Gammaproteobacteria</taxon>
        <taxon>Enterobacterales</taxon>
        <taxon>Erwiniaceae</taxon>
        <taxon>Buchnera</taxon>
    </lineage>
</organism>
<protein>
    <recommendedName>
        <fullName>NADH-quinone oxidoreductase subunit J</fullName>
        <ecNumber>7.1.1.-</ecNumber>
    </recommendedName>
    <alternativeName>
        <fullName>NADH dehydrogenase I subunit J</fullName>
    </alternativeName>
    <alternativeName>
        <fullName>NDH-1 subunit J</fullName>
    </alternativeName>
</protein>